<evidence type="ECO:0000255" key="1">
    <source>
        <dbReference type="HAMAP-Rule" id="MF_01368"/>
    </source>
</evidence>
<evidence type="ECO:0000305" key="2"/>
<gene>
    <name evidence="1" type="primary">rplQ</name>
    <name type="ordered locus">FTL_0262</name>
</gene>
<sequence length="145" mass="16784">MRHRKQGRKFGRTSSHRKAMFKNMSASLINHELIKTTLPKAKELRTIVEPLVTLAKREHKLRQELDTNSNEFKAQSVALRRQAFDFLRNKAAVTKLFEEFGARYAERAGGYTRILKCGYRFGDKAPMAFIELVDRPQVEEAADEE</sequence>
<protein>
    <recommendedName>
        <fullName evidence="1">Large ribosomal subunit protein bL17</fullName>
    </recommendedName>
    <alternativeName>
        <fullName evidence="2">50S ribosomal protein L17</fullName>
    </alternativeName>
</protein>
<accession>Q2A5E4</accession>
<reference key="1">
    <citation type="submission" date="2006-03" db="EMBL/GenBank/DDBJ databases">
        <title>Complete genome sequence of Francisella tularensis LVS (Live Vaccine Strain).</title>
        <authorList>
            <person name="Chain P."/>
            <person name="Larimer F."/>
            <person name="Land M."/>
            <person name="Stilwagen S."/>
            <person name="Larsson P."/>
            <person name="Bearden S."/>
            <person name="Chu M."/>
            <person name="Oyston P."/>
            <person name="Forsman M."/>
            <person name="Andersson S."/>
            <person name="Lindler L."/>
            <person name="Titball R."/>
            <person name="Garcia E."/>
        </authorList>
    </citation>
    <scope>NUCLEOTIDE SEQUENCE [LARGE SCALE GENOMIC DNA]</scope>
    <source>
        <strain>LVS</strain>
    </source>
</reference>
<comment type="subunit">
    <text evidence="1">Part of the 50S ribosomal subunit. Contacts protein L32.</text>
</comment>
<comment type="similarity">
    <text evidence="1">Belongs to the bacterial ribosomal protein bL17 family.</text>
</comment>
<keyword id="KW-1185">Reference proteome</keyword>
<keyword id="KW-0687">Ribonucleoprotein</keyword>
<keyword id="KW-0689">Ribosomal protein</keyword>
<dbReference type="EMBL" id="AM233362">
    <property type="protein sequence ID" value="CAJ78703.1"/>
    <property type="molecule type" value="Genomic_DNA"/>
</dbReference>
<dbReference type="RefSeq" id="WP_003014382.1">
    <property type="nucleotide sequence ID" value="NZ_CP009694.1"/>
</dbReference>
<dbReference type="SMR" id="Q2A5E4"/>
<dbReference type="GeneID" id="75264235"/>
<dbReference type="KEGG" id="ftl:FTL_0262"/>
<dbReference type="Proteomes" id="UP000001944">
    <property type="component" value="Chromosome"/>
</dbReference>
<dbReference type="GO" id="GO:0022625">
    <property type="term" value="C:cytosolic large ribosomal subunit"/>
    <property type="evidence" value="ECO:0007669"/>
    <property type="project" value="TreeGrafter"/>
</dbReference>
<dbReference type="GO" id="GO:0003735">
    <property type="term" value="F:structural constituent of ribosome"/>
    <property type="evidence" value="ECO:0007669"/>
    <property type="project" value="InterPro"/>
</dbReference>
<dbReference type="GO" id="GO:0006412">
    <property type="term" value="P:translation"/>
    <property type="evidence" value="ECO:0007669"/>
    <property type="project" value="UniProtKB-UniRule"/>
</dbReference>
<dbReference type="Gene3D" id="3.90.1030.10">
    <property type="entry name" value="Ribosomal protein L17"/>
    <property type="match status" value="1"/>
</dbReference>
<dbReference type="HAMAP" id="MF_01368">
    <property type="entry name" value="Ribosomal_bL17"/>
    <property type="match status" value="1"/>
</dbReference>
<dbReference type="InterPro" id="IPR000456">
    <property type="entry name" value="Ribosomal_bL17"/>
</dbReference>
<dbReference type="InterPro" id="IPR047859">
    <property type="entry name" value="Ribosomal_bL17_CS"/>
</dbReference>
<dbReference type="InterPro" id="IPR036373">
    <property type="entry name" value="Ribosomal_bL17_sf"/>
</dbReference>
<dbReference type="NCBIfam" id="TIGR00059">
    <property type="entry name" value="L17"/>
    <property type="match status" value="1"/>
</dbReference>
<dbReference type="PANTHER" id="PTHR14413:SF16">
    <property type="entry name" value="LARGE RIBOSOMAL SUBUNIT PROTEIN BL17M"/>
    <property type="match status" value="1"/>
</dbReference>
<dbReference type="PANTHER" id="PTHR14413">
    <property type="entry name" value="RIBOSOMAL PROTEIN L17"/>
    <property type="match status" value="1"/>
</dbReference>
<dbReference type="Pfam" id="PF01196">
    <property type="entry name" value="Ribosomal_L17"/>
    <property type="match status" value="1"/>
</dbReference>
<dbReference type="SUPFAM" id="SSF64263">
    <property type="entry name" value="Prokaryotic ribosomal protein L17"/>
    <property type="match status" value="1"/>
</dbReference>
<dbReference type="PROSITE" id="PS01167">
    <property type="entry name" value="RIBOSOMAL_L17"/>
    <property type="match status" value="1"/>
</dbReference>
<feature type="chain" id="PRO_1000055829" description="Large ribosomal subunit protein bL17">
    <location>
        <begin position="1"/>
        <end position="145"/>
    </location>
</feature>
<organism>
    <name type="scientific">Francisella tularensis subsp. holarctica (strain LVS)</name>
    <dbReference type="NCBI Taxonomy" id="376619"/>
    <lineage>
        <taxon>Bacteria</taxon>
        <taxon>Pseudomonadati</taxon>
        <taxon>Pseudomonadota</taxon>
        <taxon>Gammaproteobacteria</taxon>
        <taxon>Thiotrichales</taxon>
        <taxon>Francisellaceae</taxon>
        <taxon>Francisella</taxon>
    </lineage>
</organism>
<proteinExistence type="inferred from homology"/>
<name>RL17_FRATH</name>